<dbReference type="EMBL" id="CP001614">
    <property type="protein sequence ID" value="ACR11735.1"/>
    <property type="molecule type" value="Genomic_DNA"/>
</dbReference>
<dbReference type="RefSeq" id="WP_015817846.1">
    <property type="nucleotide sequence ID" value="NC_012997.1"/>
</dbReference>
<dbReference type="SMR" id="C5BQ33"/>
<dbReference type="STRING" id="377629.TERTU_3296"/>
<dbReference type="KEGG" id="ttu:TERTU_3296"/>
<dbReference type="eggNOG" id="COG0443">
    <property type="taxonomic scope" value="Bacteria"/>
</dbReference>
<dbReference type="HOGENOM" id="CLU_005965_2_1_6"/>
<dbReference type="OrthoDB" id="9766019at2"/>
<dbReference type="Proteomes" id="UP000009080">
    <property type="component" value="Chromosome"/>
</dbReference>
<dbReference type="GO" id="GO:0005524">
    <property type="term" value="F:ATP binding"/>
    <property type="evidence" value="ECO:0007669"/>
    <property type="project" value="UniProtKB-UniRule"/>
</dbReference>
<dbReference type="GO" id="GO:0140662">
    <property type="term" value="F:ATP-dependent protein folding chaperone"/>
    <property type="evidence" value="ECO:0007669"/>
    <property type="project" value="InterPro"/>
</dbReference>
<dbReference type="GO" id="GO:0051082">
    <property type="term" value="F:unfolded protein binding"/>
    <property type="evidence" value="ECO:0007669"/>
    <property type="project" value="InterPro"/>
</dbReference>
<dbReference type="CDD" id="cd10234">
    <property type="entry name" value="ASKHA_NBD_HSP70_DnaK-like"/>
    <property type="match status" value="1"/>
</dbReference>
<dbReference type="FunFam" id="2.60.34.10:FF:000014">
    <property type="entry name" value="Chaperone protein DnaK HSP70"/>
    <property type="match status" value="1"/>
</dbReference>
<dbReference type="FunFam" id="1.20.1270.10:FF:000001">
    <property type="entry name" value="Molecular chaperone DnaK"/>
    <property type="match status" value="1"/>
</dbReference>
<dbReference type="FunFam" id="3.30.420.40:FF:000004">
    <property type="entry name" value="Molecular chaperone DnaK"/>
    <property type="match status" value="1"/>
</dbReference>
<dbReference type="FunFam" id="3.90.640.10:FF:000003">
    <property type="entry name" value="Molecular chaperone DnaK"/>
    <property type="match status" value="1"/>
</dbReference>
<dbReference type="Gene3D" id="1.20.1270.10">
    <property type="match status" value="1"/>
</dbReference>
<dbReference type="Gene3D" id="3.30.420.40">
    <property type="match status" value="2"/>
</dbReference>
<dbReference type="Gene3D" id="3.90.640.10">
    <property type="entry name" value="Actin, Chain A, domain 4"/>
    <property type="match status" value="1"/>
</dbReference>
<dbReference type="Gene3D" id="2.60.34.10">
    <property type="entry name" value="Substrate Binding Domain Of DNAk, Chain A, domain 1"/>
    <property type="match status" value="1"/>
</dbReference>
<dbReference type="HAMAP" id="MF_00332">
    <property type="entry name" value="DnaK"/>
    <property type="match status" value="1"/>
</dbReference>
<dbReference type="InterPro" id="IPR043129">
    <property type="entry name" value="ATPase_NBD"/>
</dbReference>
<dbReference type="InterPro" id="IPR012725">
    <property type="entry name" value="Chaperone_DnaK"/>
</dbReference>
<dbReference type="InterPro" id="IPR018181">
    <property type="entry name" value="Heat_shock_70_CS"/>
</dbReference>
<dbReference type="InterPro" id="IPR029048">
    <property type="entry name" value="HSP70_C_sf"/>
</dbReference>
<dbReference type="InterPro" id="IPR029047">
    <property type="entry name" value="HSP70_peptide-bd_sf"/>
</dbReference>
<dbReference type="InterPro" id="IPR013126">
    <property type="entry name" value="Hsp_70_fam"/>
</dbReference>
<dbReference type="NCBIfam" id="NF001413">
    <property type="entry name" value="PRK00290.1"/>
    <property type="match status" value="1"/>
</dbReference>
<dbReference type="NCBIfam" id="NF003520">
    <property type="entry name" value="PRK05183.1"/>
    <property type="match status" value="1"/>
</dbReference>
<dbReference type="NCBIfam" id="TIGR02350">
    <property type="entry name" value="prok_dnaK"/>
    <property type="match status" value="1"/>
</dbReference>
<dbReference type="PANTHER" id="PTHR19375">
    <property type="entry name" value="HEAT SHOCK PROTEIN 70KDA"/>
    <property type="match status" value="1"/>
</dbReference>
<dbReference type="Pfam" id="PF00012">
    <property type="entry name" value="HSP70"/>
    <property type="match status" value="1"/>
</dbReference>
<dbReference type="PRINTS" id="PR00301">
    <property type="entry name" value="HEATSHOCK70"/>
</dbReference>
<dbReference type="SUPFAM" id="SSF53067">
    <property type="entry name" value="Actin-like ATPase domain"/>
    <property type="match status" value="2"/>
</dbReference>
<dbReference type="SUPFAM" id="SSF100934">
    <property type="entry name" value="Heat shock protein 70kD (HSP70), C-terminal subdomain"/>
    <property type="match status" value="1"/>
</dbReference>
<dbReference type="SUPFAM" id="SSF100920">
    <property type="entry name" value="Heat shock protein 70kD (HSP70), peptide-binding domain"/>
    <property type="match status" value="1"/>
</dbReference>
<dbReference type="PROSITE" id="PS00297">
    <property type="entry name" value="HSP70_1"/>
    <property type="match status" value="1"/>
</dbReference>
<dbReference type="PROSITE" id="PS00329">
    <property type="entry name" value="HSP70_2"/>
    <property type="match status" value="1"/>
</dbReference>
<dbReference type="PROSITE" id="PS01036">
    <property type="entry name" value="HSP70_3"/>
    <property type="match status" value="1"/>
</dbReference>
<name>DNAK_TERTT</name>
<feature type="chain" id="PRO_1000205199" description="Chaperone protein DnaK">
    <location>
        <begin position="1"/>
        <end position="644"/>
    </location>
</feature>
<feature type="region of interest" description="Disordered" evidence="2">
    <location>
        <begin position="602"/>
        <end position="644"/>
    </location>
</feature>
<feature type="compositionally biased region" description="Low complexity" evidence="2">
    <location>
        <begin position="604"/>
        <end position="614"/>
    </location>
</feature>
<feature type="compositionally biased region" description="Acidic residues" evidence="2">
    <location>
        <begin position="631"/>
        <end position="644"/>
    </location>
</feature>
<feature type="modified residue" description="Phosphothreonine; by autocatalysis" evidence="1">
    <location>
        <position position="199"/>
    </location>
</feature>
<accession>C5BQ33</accession>
<protein>
    <recommendedName>
        <fullName evidence="1">Chaperone protein DnaK</fullName>
    </recommendedName>
    <alternativeName>
        <fullName evidence="1">HSP70</fullName>
    </alternativeName>
    <alternativeName>
        <fullName evidence="1">Heat shock 70 kDa protein</fullName>
    </alternativeName>
    <alternativeName>
        <fullName evidence="1">Heat shock protein 70</fullName>
    </alternativeName>
</protein>
<evidence type="ECO:0000255" key="1">
    <source>
        <dbReference type="HAMAP-Rule" id="MF_00332"/>
    </source>
</evidence>
<evidence type="ECO:0000256" key="2">
    <source>
        <dbReference type="SAM" id="MobiDB-lite"/>
    </source>
</evidence>
<comment type="function">
    <text evidence="1">Acts as a chaperone.</text>
</comment>
<comment type="induction">
    <text evidence="1">By stress conditions e.g. heat shock.</text>
</comment>
<comment type="similarity">
    <text evidence="1">Belongs to the heat shock protein 70 family.</text>
</comment>
<reference key="1">
    <citation type="journal article" date="2009" name="PLoS ONE">
        <title>The complete genome of Teredinibacter turnerae T7901: an intracellular endosymbiont of marine wood-boring bivalves (shipworms).</title>
        <authorList>
            <person name="Yang J.C."/>
            <person name="Madupu R."/>
            <person name="Durkin A.S."/>
            <person name="Ekborg N.A."/>
            <person name="Pedamallu C.S."/>
            <person name="Hostetler J.B."/>
            <person name="Radune D."/>
            <person name="Toms B.S."/>
            <person name="Henrissat B."/>
            <person name="Coutinho P.M."/>
            <person name="Schwarz S."/>
            <person name="Field L."/>
            <person name="Trindade-Silva A.E."/>
            <person name="Soares C.A.G."/>
            <person name="Elshahawi S."/>
            <person name="Hanora A."/>
            <person name="Schmidt E.W."/>
            <person name="Haygood M.G."/>
            <person name="Posfai J."/>
            <person name="Benner J."/>
            <person name="Madinger C."/>
            <person name="Nove J."/>
            <person name="Anton B."/>
            <person name="Chaudhary K."/>
            <person name="Foster J."/>
            <person name="Holman A."/>
            <person name="Kumar S."/>
            <person name="Lessard P.A."/>
            <person name="Luyten Y.A."/>
            <person name="Slatko B."/>
            <person name="Wood N."/>
            <person name="Wu B."/>
            <person name="Teplitski M."/>
            <person name="Mougous J.D."/>
            <person name="Ward N."/>
            <person name="Eisen J.A."/>
            <person name="Badger J.H."/>
            <person name="Distel D.L."/>
        </authorList>
    </citation>
    <scope>NUCLEOTIDE SEQUENCE [LARGE SCALE GENOMIC DNA]</scope>
    <source>
        <strain>ATCC 39867 / T7901</strain>
    </source>
</reference>
<gene>
    <name evidence="1" type="primary">dnaK</name>
    <name type="ordered locus">TERTU_3296</name>
</gene>
<sequence>MGKIIGIDLGTTNSCVSVLEGDKAKVIENAEGDRTTPSIVAFTDDNEILVGQSAKRQAVTNPRNTLFAVKRLIGRKFTDDVVQKDIKMVPYSIVGADNGDAWVEVKGDKKAPPQISAEVLKKMKKTAEDYLGEKVTEAVITVPAYFNDSQRQATKDAGKIAGLEVKRIINEPTAAALAYGMDKAKGDRTIAVYDLGGGTFDISVIEIADVDGEHQFEVLSTNGDTFLGGEDFDLRLIEYLAEEFKKSNGIDLHNDPLALQRLKEAAEKAKIELSSSQQTEVNLPYITADATGPKHLVVKLTRAKLESLVEELVNRSLEPVKMAIKDADLSVSEIDDVILVGGQTRMPLVQQKVAEFFGKEPRKDVNPDEAVAMGAAIQGAVLSGDVKDVLLLDVTPLTLGIETMGGVATPLIEKNTTIPTKKSQVFSTAEDNQTAVTIHVVQGERKQAAQNKSLGRFDLADIPPAPRGMPQVEVTFDIDANGILNVSAKDKATGKEQSIVIKASSGLSDDEIENMVKDAEANAEADRKFEELVSARNTLEGLVHATKKTLEEAGDKATAEEKSAIEAAITEAEEALKSGDKDAIEAATKKVTDASGSLAQKLYAEQSAQQQGSAGATGGEQPKADKAADDGVVDAEFEEVKDDK</sequence>
<organism>
    <name type="scientific">Teredinibacter turnerae (strain ATCC 39867 / T7901)</name>
    <dbReference type="NCBI Taxonomy" id="377629"/>
    <lineage>
        <taxon>Bacteria</taxon>
        <taxon>Pseudomonadati</taxon>
        <taxon>Pseudomonadota</taxon>
        <taxon>Gammaproteobacteria</taxon>
        <taxon>Cellvibrionales</taxon>
        <taxon>Cellvibrionaceae</taxon>
        <taxon>Teredinibacter</taxon>
    </lineage>
</organism>
<proteinExistence type="inferred from homology"/>
<keyword id="KW-0067">ATP-binding</keyword>
<keyword id="KW-0143">Chaperone</keyword>
<keyword id="KW-0547">Nucleotide-binding</keyword>
<keyword id="KW-0597">Phosphoprotein</keyword>
<keyword id="KW-1185">Reference proteome</keyword>
<keyword id="KW-0346">Stress response</keyword>